<protein>
    <recommendedName>
        <fullName>Protein translocase subunit SecF</fullName>
    </recommendedName>
</protein>
<sequence length="315" mass="34667">MKLDLFKWEKPAWIVSSLLVLISIFAMAISWAQFQAPFRPGLDFVGGTRLQLQLECASSNNCPAAIDVAEVQDILGGVGLGNSSVQVIEDYTLSIRQQTLDVEQREAVQKALNEGIGKFDPETIQIDTVGPTVGKALFRSGVLALVISLLGIIIYLTIRFQLDYAVFAIIALLYDALITMGAFAIFGLVGGVEVDSLFLVALLTIIGFSVNDTVVIYDRVRETLERHSDWDINHVVDDAVNQTLTRSINTSLTTSLPLVAIFLFGGDSLKFFALALIIGFASGVYSSIFMATTLWAWWRKWRSPKNPPREMVAEV</sequence>
<accession>Q55611</accession>
<dbReference type="EMBL" id="BA000022">
    <property type="protein sequence ID" value="BAA10119.1"/>
    <property type="molecule type" value="Genomic_DNA"/>
</dbReference>
<dbReference type="PIR" id="S76267">
    <property type="entry name" value="S76267"/>
</dbReference>
<dbReference type="SMR" id="Q55611"/>
<dbReference type="IntAct" id="Q55611">
    <property type="interactions" value="1"/>
</dbReference>
<dbReference type="STRING" id="1148.gene:10499611"/>
<dbReference type="PaxDb" id="1148-1001494"/>
<dbReference type="EnsemblBacteria" id="BAA10119">
    <property type="protein sequence ID" value="BAA10119"/>
    <property type="gene ID" value="BAA10119"/>
</dbReference>
<dbReference type="KEGG" id="syn:slr0775"/>
<dbReference type="eggNOG" id="COG0341">
    <property type="taxonomic scope" value="Bacteria"/>
</dbReference>
<dbReference type="InParanoid" id="Q55611"/>
<dbReference type="PhylomeDB" id="Q55611"/>
<dbReference type="Proteomes" id="UP000001425">
    <property type="component" value="Chromosome"/>
</dbReference>
<dbReference type="GO" id="GO:0005886">
    <property type="term" value="C:plasma membrane"/>
    <property type="evidence" value="ECO:0000318"/>
    <property type="project" value="GO_Central"/>
</dbReference>
<dbReference type="GO" id="GO:0015450">
    <property type="term" value="F:protein-transporting ATPase activity"/>
    <property type="evidence" value="ECO:0007669"/>
    <property type="project" value="InterPro"/>
</dbReference>
<dbReference type="GO" id="GO:0065002">
    <property type="term" value="P:intracellular protein transmembrane transport"/>
    <property type="evidence" value="ECO:0007669"/>
    <property type="project" value="UniProtKB-UniRule"/>
</dbReference>
<dbReference type="GO" id="GO:0006605">
    <property type="term" value="P:protein targeting"/>
    <property type="evidence" value="ECO:0007669"/>
    <property type="project" value="UniProtKB-UniRule"/>
</dbReference>
<dbReference type="GO" id="GO:0015031">
    <property type="term" value="P:protein transport"/>
    <property type="evidence" value="ECO:0000318"/>
    <property type="project" value="GO_Central"/>
</dbReference>
<dbReference type="GO" id="GO:0043952">
    <property type="term" value="P:protein transport by the Sec complex"/>
    <property type="evidence" value="ECO:0007669"/>
    <property type="project" value="UniProtKB-UniRule"/>
</dbReference>
<dbReference type="FunFam" id="1.20.1640.10:FF:000055">
    <property type="entry name" value="Protein-export membrane protein SecF"/>
    <property type="match status" value="1"/>
</dbReference>
<dbReference type="Gene3D" id="1.20.1640.10">
    <property type="entry name" value="Multidrug efflux transporter AcrB transmembrane domain"/>
    <property type="match status" value="1"/>
</dbReference>
<dbReference type="HAMAP" id="MF_01464_B">
    <property type="entry name" value="SecF_B"/>
    <property type="match status" value="1"/>
</dbReference>
<dbReference type="InterPro" id="IPR022813">
    <property type="entry name" value="SecD/SecF_arch_bac"/>
</dbReference>
<dbReference type="InterPro" id="IPR022645">
    <property type="entry name" value="SecD/SecF_bac"/>
</dbReference>
<dbReference type="InterPro" id="IPR022646">
    <property type="entry name" value="SecD/SecF_CS"/>
</dbReference>
<dbReference type="InterPro" id="IPR048634">
    <property type="entry name" value="SecD_SecF_C"/>
</dbReference>
<dbReference type="InterPro" id="IPR055344">
    <property type="entry name" value="SecD_SecF_C_bact"/>
</dbReference>
<dbReference type="InterPro" id="IPR005665">
    <property type="entry name" value="SecF_bac"/>
</dbReference>
<dbReference type="NCBIfam" id="TIGR00916">
    <property type="entry name" value="2A0604s01"/>
    <property type="match status" value="1"/>
</dbReference>
<dbReference type="NCBIfam" id="TIGR00966">
    <property type="entry name" value="transloc_SecF"/>
    <property type="match status" value="1"/>
</dbReference>
<dbReference type="PANTHER" id="PTHR30081:SF8">
    <property type="entry name" value="PROTEIN TRANSLOCASE SUBUNIT SECF"/>
    <property type="match status" value="1"/>
</dbReference>
<dbReference type="PANTHER" id="PTHR30081">
    <property type="entry name" value="PROTEIN-EXPORT MEMBRANE PROTEIN SEC"/>
    <property type="match status" value="1"/>
</dbReference>
<dbReference type="Pfam" id="PF07549">
    <property type="entry name" value="Sec_GG"/>
    <property type="match status" value="1"/>
</dbReference>
<dbReference type="Pfam" id="PF02355">
    <property type="entry name" value="SecD_SecF_C"/>
    <property type="match status" value="1"/>
</dbReference>
<dbReference type="PRINTS" id="PR01755">
    <property type="entry name" value="SECFTRNLCASE"/>
</dbReference>
<dbReference type="SUPFAM" id="SSF82866">
    <property type="entry name" value="Multidrug efflux transporter AcrB transmembrane domain"/>
    <property type="match status" value="1"/>
</dbReference>
<proteinExistence type="inferred from homology"/>
<organism>
    <name type="scientific">Synechocystis sp. (strain ATCC 27184 / PCC 6803 / Kazusa)</name>
    <dbReference type="NCBI Taxonomy" id="1111708"/>
    <lineage>
        <taxon>Bacteria</taxon>
        <taxon>Bacillati</taxon>
        <taxon>Cyanobacteriota</taxon>
        <taxon>Cyanophyceae</taxon>
        <taxon>Synechococcales</taxon>
        <taxon>Merismopediaceae</taxon>
        <taxon>Synechocystis</taxon>
    </lineage>
</organism>
<keyword id="KW-0997">Cell inner membrane</keyword>
<keyword id="KW-1003">Cell membrane</keyword>
<keyword id="KW-0472">Membrane</keyword>
<keyword id="KW-0653">Protein transport</keyword>
<keyword id="KW-1185">Reference proteome</keyword>
<keyword id="KW-0811">Translocation</keyword>
<keyword id="KW-0812">Transmembrane</keyword>
<keyword id="KW-1133">Transmembrane helix</keyword>
<keyword id="KW-0813">Transport</keyword>
<gene>
    <name evidence="1" type="primary">secF</name>
    <name type="ordered locus">slr0775</name>
</gene>
<reference key="1">
    <citation type="journal article" date="1995" name="DNA Res.">
        <title>Sequence analysis of the genome of the unicellular cyanobacterium Synechocystis sp. strain PCC6803. I. Sequence features in the 1 Mb region from map positions 64% to 92% of the genome.</title>
        <authorList>
            <person name="Kaneko T."/>
            <person name="Tanaka A."/>
            <person name="Sato S."/>
            <person name="Kotani H."/>
            <person name="Sazuka T."/>
            <person name="Miyajima N."/>
            <person name="Sugiura M."/>
            <person name="Tabata S."/>
        </authorList>
    </citation>
    <scope>NUCLEOTIDE SEQUENCE [LARGE SCALE GENOMIC DNA]</scope>
    <source>
        <strain>ATCC 27184 / PCC 6803 / N-1</strain>
    </source>
</reference>
<reference key="2">
    <citation type="journal article" date="1996" name="DNA Res.">
        <title>Sequence analysis of the genome of the unicellular cyanobacterium Synechocystis sp. strain PCC6803. II. Sequence determination of the entire genome and assignment of potential protein-coding regions.</title>
        <authorList>
            <person name="Kaneko T."/>
            <person name="Sato S."/>
            <person name="Kotani H."/>
            <person name="Tanaka A."/>
            <person name="Asamizu E."/>
            <person name="Nakamura Y."/>
            <person name="Miyajima N."/>
            <person name="Hirosawa M."/>
            <person name="Sugiura M."/>
            <person name="Sasamoto S."/>
            <person name="Kimura T."/>
            <person name="Hosouchi T."/>
            <person name="Matsuno A."/>
            <person name="Muraki A."/>
            <person name="Nakazaki N."/>
            <person name="Naruo K."/>
            <person name="Okumura S."/>
            <person name="Shimpo S."/>
            <person name="Takeuchi C."/>
            <person name="Wada T."/>
            <person name="Watanabe A."/>
            <person name="Yamada M."/>
            <person name="Yasuda M."/>
            <person name="Tabata S."/>
        </authorList>
    </citation>
    <scope>NUCLEOTIDE SEQUENCE [LARGE SCALE GENOMIC DNA]</scope>
    <source>
        <strain>ATCC 27184 / PCC 6803 / Kazusa</strain>
    </source>
</reference>
<evidence type="ECO:0000255" key="1">
    <source>
        <dbReference type="HAMAP-Rule" id="MF_01464"/>
    </source>
</evidence>
<comment type="function">
    <text evidence="1">Part of the Sec protein translocase complex. Interacts with the SecYEG preprotein conducting channel. SecDF uses the proton motive force (PMF) to complete protein translocation after the ATP-dependent function of SecA.</text>
</comment>
<comment type="function">
    <text evidence="1">Probably participates in protein translocation into and across both the cytoplasmic and thylakoid membranes in cyanobacterial cells.</text>
</comment>
<comment type="subunit">
    <text evidence="1">Forms a complex with SecD. Part of the essential Sec protein translocation apparatus which comprises SecA, SecYEG and auxiliary proteins SecDF. Other proteins may also be involved.</text>
</comment>
<comment type="subcellular location">
    <subcellularLocation>
        <location evidence="1">Cell inner membrane</location>
        <topology evidence="1">Multi-pass membrane protein</topology>
    </subcellularLocation>
</comment>
<comment type="similarity">
    <text evidence="1">Belongs to the SecD/SecF family. SecF subfamily.</text>
</comment>
<feature type="chain" id="PRO_0000095988" description="Protein translocase subunit SecF">
    <location>
        <begin position="1"/>
        <end position="315"/>
    </location>
</feature>
<feature type="transmembrane region" description="Helical" evidence="1">
    <location>
        <begin position="12"/>
        <end position="32"/>
    </location>
</feature>
<feature type="transmembrane region" description="Helical" evidence="1">
    <location>
        <begin position="136"/>
        <end position="156"/>
    </location>
</feature>
<feature type="transmembrane region" description="Helical" evidence="1">
    <location>
        <begin position="166"/>
        <end position="186"/>
    </location>
</feature>
<feature type="transmembrane region" description="Helical" evidence="1">
    <location>
        <begin position="188"/>
        <end position="208"/>
    </location>
</feature>
<feature type="transmembrane region" description="Helical" evidence="1">
    <location>
        <begin position="247"/>
        <end position="267"/>
    </location>
</feature>
<feature type="transmembrane region" description="Helical" evidence="1">
    <location>
        <begin position="271"/>
        <end position="291"/>
    </location>
</feature>
<name>SECF_SYNY3</name>